<proteinExistence type="inferred from homology"/>
<sequence length="170" mass="19631">MPLTWKDSGLRWYWVVVLVFLADQLSKQWVLANFDLFESVKLLPFFNFTYVRNYGAAFSFLSEAGGWQRWLFTLVAVGFSTLLTVWLRKQSASLWKLNLAYTLVIGGALGNLIDRLMHGFVVDFIDFYWGKSHYPAFNIADSAIFIGAVLIIWDSFFNSKSEQDKTEEVK</sequence>
<keyword id="KW-0064">Aspartyl protease</keyword>
<keyword id="KW-0997">Cell inner membrane</keyword>
<keyword id="KW-1003">Cell membrane</keyword>
<keyword id="KW-0378">Hydrolase</keyword>
<keyword id="KW-0472">Membrane</keyword>
<keyword id="KW-0645">Protease</keyword>
<keyword id="KW-0812">Transmembrane</keyword>
<keyword id="KW-1133">Transmembrane helix</keyword>
<protein>
    <recommendedName>
        <fullName evidence="1">Lipoprotein signal peptidase</fullName>
        <ecNumber evidence="1">3.4.23.36</ecNumber>
    </recommendedName>
    <alternativeName>
        <fullName evidence="1">Prolipoprotein signal peptidase</fullName>
    </alternativeName>
    <alternativeName>
        <fullName evidence="1">Signal peptidase II</fullName>
        <shortName evidence="1">SPase II</shortName>
    </alternativeName>
</protein>
<name>LSPA_SHESM</name>
<gene>
    <name evidence="1" type="primary">lspA</name>
    <name type="ordered locus">Shewmr4_2956</name>
</gene>
<feature type="chain" id="PRO_0000289421" description="Lipoprotein signal peptidase">
    <location>
        <begin position="1"/>
        <end position="170"/>
    </location>
</feature>
<feature type="transmembrane region" description="Helical" evidence="1">
    <location>
        <begin position="12"/>
        <end position="32"/>
    </location>
</feature>
<feature type="transmembrane region" description="Helical" evidence="1">
    <location>
        <begin position="67"/>
        <end position="87"/>
    </location>
</feature>
<feature type="transmembrane region" description="Helical" evidence="1">
    <location>
        <begin position="93"/>
        <end position="113"/>
    </location>
</feature>
<feature type="transmembrane region" description="Helical" evidence="1">
    <location>
        <begin position="137"/>
        <end position="157"/>
    </location>
</feature>
<feature type="active site" evidence="1">
    <location>
        <position position="123"/>
    </location>
</feature>
<feature type="active site" evidence="1">
    <location>
        <position position="141"/>
    </location>
</feature>
<comment type="function">
    <text evidence="1">This protein specifically catalyzes the removal of signal peptides from prolipoproteins.</text>
</comment>
<comment type="catalytic activity">
    <reaction evidence="1">
        <text>Release of signal peptides from bacterial membrane prolipoproteins. Hydrolyzes -Xaa-Yaa-Zaa-|-(S,diacylglyceryl)Cys-, in which Xaa is hydrophobic (preferably Leu), and Yaa (Ala or Ser) and Zaa (Gly or Ala) have small, neutral side chains.</text>
        <dbReference type="EC" id="3.4.23.36"/>
    </reaction>
</comment>
<comment type="pathway">
    <text evidence="1">Protein modification; lipoprotein biosynthesis (signal peptide cleavage).</text>
</comment>
<comment type="subcellular location">
    <subcellularLocation>
        <location evidence="1">Cell inner membrane</location>
        <topology evidence="1">Multi-pass membrane protein</topology>
    </subcellularLocation>
</comment>
<comment type="similarity">
    <text evidence="1">Belongs to the peptidase A8 family.</text>
</comment>
<reference key="1">
    <citation type="submission" date="2006-08" db="EMBL/GenBank/DDBJ databases">
        <title>Complete sequence of Shewanella sp. MR-4.</title>
        <authorList>
            <consortium name="US DOE Joint Genome Institute"/>
            <person name="Copeland A."/>
            <person name="Lucas S."/>
            <person name="Lapidus A."/>
            <person name="Barry K."/>
            <person name="Detter J.C."/>
            <person name="Glavina del Rio T."/>
            <person name="Hammon N."/>
            <person name="Israni S."/>
            <person name="Dalin E."/>
            <person name="Tice H."/>
            <person name="Pitluck S."/>
            <person name="Kiss H."/>
            <person name="Brettin T."/>
            <person name="Bruce D."/>
            <person name="Han C."/>
            <person name="Tapia R."/>
            <person name="Gilna P."/>
            <person name="Schmutz J."/>
            <person name="Larimer F."/>
            <person name="Land M."/>
            <person name="Hauser L."/>
            <person name="Kyrpides N."/>
            <person name="Mikhailova N."/>
            <person name="Nealson K."/>
            <person name="Konstantinidis K."/>
            <person name="Klappenbach J."/>
            <person name="Tiedje J."/>
            <person name="Richardson P."/>
        </authorList>
    </citation>
    <scope>NUCLEOTIDE SEQUENCE [LARGE SCALE GENOMIC DNA]</scope>
    <source>
        <strain>MR-4</strain>
    </source>
</reference>
<evidence type="ECO:0000255" key="1">
    <source>
        <dbReference type="HAMAP-Rule" id="MF_00161"/>
    </source>
</evidence>
<accession>Q0HFZ0</accession>
<dbReference type="EC" id="3.4.23.36" evidence="1"/>
<dbReference type="EMBL" id="CP000446">
    <property type="protein sequence ID" value="ABI40027.1"/>
    <property type="molecule type" value="Genomic_DNA"/>
</dbReference>
<dbReference type="RefSeq" id="WP_011623704.1">
    <property type="nucleotide sequence ID" value="NC_008321.1"/>
</dbReference>
<dbReference type="SMR" id="Q0HFZ0"/>
<dbReference type="MEROPS" id="A08.001"/>
<dbReference type="GeneID" id="94729056"/>
<dbReference type="KEGG" id="she:Shewmr4_2956"/>
<dbReference type="HOGENOM" id="CLU_083252_4_0_6"/>
<dbReference type="UniPathway" id="UPA00665"/>
<dbReference type="GO" id="GO:0005886">
    <property type="term" value="C:plasma membrane"/>
    <property type="evidence" value="ECO:0007669"/>
    <property type="project" value="UniProtKB-SubCell"/>
</dbReference>
<dbReference type="GO" id="GO:0004190">
    <property type="term" value="F:aspartic-type endopeptidase activity"/>
    <property type="evidence" value="ECO:0007669"/>
    <property type="project" value="UniProtKB-UniRule"/>
</dbReference>
<dbReference type="GO" id="GO:0006508">
    <property type="term" value="P:proteolysis"/>
    <property type="evidence" value="ECO:0007669"/>
    <property type="project" value="UniProtKB-KW"/>
</dbReference>
<dbReference type="HAMAP" id="MF_00161">
    <property type="entry name" value="LspA"/>
    <property type="match status" value="1"/>
</dbReference>
<dbReference type="InterPro" id="IPR001872">
    <property type="entry name" value="Peptidase_A8"/>
</dbReference>
<dbReference type="NCBIfam" id="TIGR00077">
    <property type="entry name" value="lspA"/>
    <property type="match status" value="1"/>
</dbReference>
<dbReference type="PANTHER" id="PTHR33695">
    <property type="entry name" value="LIPOPROTEIN SIGNAL PEPTIDASE"/>
    <property type="match status" value="1"/>
</dbReference>
<dbReference type="PANTHER" id="PTHR33695:SF1">
    <property type="entry name" value="LIPOPROTEIN SIGNAL PEPTIDASE"/>
    <property type="match status" value="1"/>
</dbReference>
<dbReference type="Pfam" id="PF01252">
    <property type="entry name" value="Peptidase_A8"/>
    <property type="match status" value="1"/>
</dbReference>
<dbReference type="PRINTS" id="PR00781">
    <property type="entry name" value="LIPOSIGPTASE"/>
</dbReference>
<dbReference type="PROSITE" id="PS00855">
    <property type="entry name" value="SPASE_II"/>
    <property type="match status" value="1"/>
</dbReference>
<organism>
    <name type="scientific">Shewanella sp. (strain MR-4)</name>
    <dbReference type="NCBI Taxonomy" id="60480"/>
    <lineage>
        <taxon>Bacteria</taxon>
        <taxon>Pseudomonadati</taxon>
        <taxon>Pseudomonadota</taxon>
        <taxon>Gammaproteobacteria</taxon>
        <taxon>Alteromonadales</taxon>
        <taxon>Shewanellaceae</taxon>
        <taxon>Shewanella</taxon>
    </lineage>
</organism>